<sequence length="555" mass="63538">MSEAEARPTNFIRQIIDEDLASGKHTTVHTRFPPEPNGYLHIGHAKSICLNFGIAQDYQGQCNLRFDDTNPVKEDIEYVDSIKNDVEWLGFHWSGDIRYSSDYFDQLHAYAVELINKGLAYVDELTPEQIREYRGTLTAPGKNSPFRDRSVEENLALFEKMRTGGFEEGKACLRAKIDMASPFIVMRDPVLYRIKFAEHHQTGNKWCIYPMYDFTHCISDALEGITHSLCTLEFQDNRRLYDWVLDNITIPVHPRQYEFSRLNLEYTVMSKRKLNLLVTDKHVEGWDDPRMPTISGLRRRGYTAASIREFCKRIGVTKQDNTIEMASLESCIREDLNENAPRAMAVIDPVKLVIENYPQGESEMVTMPNHPNKPEMGSREVPFSGEIWIDRADFREEANKQYKRLVMGKEVRLRNAYVIKAERVEKDAEGNITTIFCTYDADTLSKDPADGRKVKGVIHWVSAAHALPIEIRLYDRLFSVPNPGAAEDFLSVINPESLVIKQGYGEPSLKAAVAGKAFQFEREGYFCLDSRYATADKLVFNRTVGLRDTWAKAGE</sequence>
<organism>
    <name type="scientific">Salmonella agona (strain SL483)</name>
    <dbReference type="NCBI Taxonomy" id="454166"/>
    <lineage>
        <taxon>Bacteria</taxon>
        <taxon>Pseudomonadati</taxon>
        <taxon>Pseudomonadota</taxon>
        <taxon>Gammaproteobacteria</taxon>
        <taxon>Enterobacterales</taxon>
        <taxon>Enterobacteriaceae</taxon>
        <taxon>Salmonella</taxon>
    </lineage>
</organism>
<feature type="chain" id="PRO_1000095508" description="Glutamine--tRNA ligase">
    <location>
        <begin position="1"/>
        <end position="555"/>
    </location>
</feature>
<feature type="region of interest" description="Interaction with tRNA" evidence="1">
    <location>
        <begin position="317"/>
        <end position="324"/>
    </location>
</feature>
<feature type="short sequence motif" description="'HIGH' region" evidence="1">
    <location>
        <begin position="34"/>
        <end position="44"/>
    </location>
</feature>
<feature type="short sequence motif" description="'KMSKS' region" evidence="1">
    <location>
        <begin position="268"/>
        <end position="272"/>
    </location>
</feature>
<feature type="binding site" evidence="1">
    <location>
        <begin position="35"/>
        <end position="37"/>
    </location>
    <ligand>
        <name>ATP</name>
        <dbReference type="ChEBI" id="CHEBI:30616"/>
    </ligand>
</feature>
<feature type="binding site" evidence="1">
    <location>
        <begin position="41"/>
        <end position="47"/>
    </location>
    <ligand>
        <name>ATP</name>
        <dbReference type="ChEBI" id="CHEBI:30616"/>
    </ligand>
</feature>
<feature type="binding site" evidence="1">
    <location>
        <position position="67"/>
    </location>
    <ligand>
        <name>L-glutamine</name>
        <dbReference type="ChEBI" id="CHEBI:58359"/>
    </ligand>
</feature>
<feature type="binding site" evidence="1">
    <location>
        <position position="212"/>
    </location>
    <ligand>
        <name>L-glutamine</name>
        <dbReference type="ChEBI" id="CHEBI:58359"/>
    </ligand>
</feature>
<feature type="binding site" evidence="1">
    <location>
        <position position="231"/>
    </location>
    <ligand>
        <name>ATP</name>
        <dbReference type="ChEBI" id="CHEBI:30616"/>
    </ligand>
</feature>
<feature type="binding site" evidence="1">
    <location>
        <begin position="261"/>
        <end position="262"/>
    </location>
    <ligand>
        <name>ATP</name>
        <dbReference type="ChEBI" id="CHEBI:30616"/>
    </ligand>
</feature>
<feature type="binding site" evidence="1">
    <location>
        <begin position="269"/>
        <end position="271"/>
    </location>
    <ligand>
        <name>ATP</name>
        <dbReference type="ChEBI" id="CHEBI:30616"/>
    </ligand>
</feature>
<accession>B5EZC3</accession>
<dbReference type="EC" id="6.1.1.18" evidence="1"/>
<dbReference type="EMBL" id="CP001138">
    <property type="protein sequence ID" value="ACH52221.1"/>
    <property type="molecule type" value="Genomic_DNA"/>
</dbReference>
<dbReference type="RefSeq" id="WP_001287181.1">
    <property type="nucleotide sequence ID" value="NC_011149.1"/>
</dbReference>
<dbReference type="SMR" id="B5EZC3"/>
<dbReference type="KEGG" id="sea:SeAg_B0733"/>
<dbReference type="HOGENOM" id="CLU_001882_2_3_6"/>
<dbReference type="Proteomes" id="UP000008819">
    <property type="component" value="Chromosome"/>
</dbReference>
<dbReference type="GO" id="GO:0005829">
    <property type="term" value="C:cytosol"/>
    <property type="evidence" value="ECO:0007669"/>
    <property type="project" value="TreeGrafter"/>
</dbReference>
<dbReference type="GO" id="GO:0005524">
    <property type="term" value="F:ATP binding"/>
    <property type="evidence" value="ECO:0007669"/>
    <property type="project" value="UniProtKB-UniRule"/>
</dbReference>
<dbReference type="GO" id="GO:0004819">
    <property type="term" value="F:glutamine-tRNA ligase activity"/>
    <property type="evidence" value="ECO:0007669"/>
    <property type="project" value="UniProtKB-UniRule"/>
</dbReference>
<dbReference type="GO" id="GO:0006425">
    <property type="term" value="P:glutaminyl-tRNA aminoacylation"/>
    <property type="evidence" value="ECO:0007669"/>
    <property type="project" value="InterPro"/>
</dbReference>
<dbReference type="GO" id="GO:0006424">
    <property type="term" value="P:glutamyl-tRNA aminoacylation"/>
    <property type="evidence" value="ECO:0007669"/>
    <property type="project" value="UniProtKB-UniRule"/>
</dbReference>
<dbReference type="CDD" id="cd00807">
    <property type="entry name" value="GlnRS_core"/>
    <property type="match status" value="1"/>
</dbReference>
<dbReference type="FunFam" id="1.10.1160.10:FF:000001">
    <property type="entry name" value="Glutamine--tRNA ligase"/>
    <property type="match status" value="1"/>
</dbReference>
<dbReference type="FunFam" id="2.40.240.10:FF:000001">
    <property type="entry name" value="Glutamine--tRNA ligase"/>
    <property type="match status" value="1"/>
</dbReference>
<dbReference type="FunFam" id="2.40.240.10:FF:000003">
    <property type="entry name" value="Glutamine--tRNA ligase"/>
    <property type="match status" value="1"/>
</dbReference>
<dbReference type="FunFam" id="3.90.800.10:FF:000001">
    <property type="entry name" value="Glutamine--tRNA ligase"/>
    <property type="match status" value="1"/>
</dbReference>
<dbReference type="FunFam" id="3.40.50.620:FF:000037">
    <property type="entry name" value="Glutamine--tRNA ligase cytoplasmic"/>
    <property type="match status" value="1"/>
</dbReference>
<dbReference type="Gene3D" id="1.10.1160.10">
    <property type="entry name" value="Glutamyl-trna Synthetase, Domain 2"/>
    <property type="match status" value="1"/>
</dbReference>
<dbReference type="Gene3D" id="3.90.800.10">
    <property type="entry name" value="Glutamyl-tRNA Synthetase, Domain 3"/>
    <property type="match status" value="1"/>
</dbReference>
<dbReference type="Gene3D" id="3.40.50.620">
    <property type="entry name" value="HUPs"/>
    <property type="match status" value="1"/>
</dbReference>
<dbReference type="Gene3D" id="2.40.240.10">
    <property type="entry name" value="Ribosomal Protein L25, Chain P"/>
    <property type="match status" value="2"/>
</dbReference>
<dbReference type="HAMAP" id="MF_00126">
    <property type="entry name" value="Gln_tRNA_synth"/>
    <property type="match status" value="1"/>
</dbReference>
<dbReference type="InterPro" id="IPR001412">
    <property type="entry name" value="aa-tRNA-synth_I_CS"/>
</dbReference>
<dbReference type="InterPro" id="IPR004514">
    <property type="entry name" value="Gln-tRNA-synth"/>
</dbReference>
<dbReference type="InterPro" id="IPR050132">
    <property type="entry name" value="Gln/Glu-tRNA_Ligase"/>
</dbReference>
<dbReference type="InterPro" id="IPR022861">
    <property type="entry name" value="Gln_tRNA_ligase_bac"/>
</dbReference>
<dbReference type="InterPro" id="IPR000924">
    <property type="entry name" value="Glu/Gln-tRNA-synth"/>
</dbReference>
<dbReference type="InterPro" id="IPR020058">
    <property type="entry name" value="Glu/Gln-tRNA-synth_Ib_cat-dom"/>
</dbReference>
<dbReference type="InterPro" id="IPR020059">
    <property type="entry name" value="Glu/Gln-tRNA-synth_Ib_codon-bd"/>
</dbReference>
<dbReference type="InterPro" id="IPR020061">
    <property type="entry name" value="Glu_tRNA_lig_a-bdl"/>
</dbReference>
<dbReference type="InterPro" id="IPR020056">
    <property type="entry name" value="Rbsml_bL25/Gln-tRNA_synth_N"/>
</dbReference>
<dbReference type="InterPro" id="IPR011035">
    <property type="entry name" value="Ribosomal_bL25/Gln-tRNA_synth"/>
</dbReference>
<dbReference type="InterPro" id="IPR014729">
    <property type="entry name" value="Rossmann-like_a/b/a_fold"/>
</dbReference>
<dbReference type="InterPro" id="IPR049437">
    <property type="entry name" value="tRNA-synt_1c_C2"/>
</dbReference>
<dbReference type="NCBIfam" id="TIGR00440">
    <property type="entry name" value="glnS"/>
    <property type="match status" value="1"/>
</dbReference>
<dbReference type="NCBIfam" id="NF011291">
    <property type="entry name" value="PRK14703.1"/>
    <property type="match status" value="1"/>
</dbReference>
<dbReference type="PANTHER" id="PTHR43097:SF5">
    <property type="entry name" value="GLUTAMATE--TRNA LIGASE"/>
    <property type="match status" value="1"/>
</dbReference>
<dbReference type="PANTHER" id="PTHR43097">
    <property type="entry name" value="GLUTAMINE-TRNA LIGASE"/>
    <property type="match status" value="1"/>
</dbReference>
<dbReference type="Pfam" id="PF00749">
    <property type="entry name" value="tRNA-synt_1c"/>
    <property type="match status" value="1"/>
</dbReference>
<dbReference type="Pfam" id="PF03950">
    <property type="entry name" value="tRNA-synt_1c_C"/>
    <property type="match status" value="1"/>
</dbReference>
<dbReference type="Pfam" id="PF20974">
    <property type="entry name" value="tRNA-synt_1c_C2"/>
    <property type="match status" value="1"/>
</dbReference>
<dbReference type="PRINTS" id="PR00987">
    <property type="entry name" value="TRNASYNTHGLU"/>
</dbReference>
<dbReference type="SUPFAM" id="SSF52374">
    <property type="entry name" value="Nucleotidylyl transferase"/>
    <property type="match status" value="1"/>
</dbReference>
<dbReference type="SUPFAM" id="SSF50715">
    <property type="entry name" value="Ribosomal protein L25-like"/>
    <property type="match status" value="1"/>
</dbReference>
<dbReference type="PROSITE" id="PS00178">
    <property type="entry name" value="AA_TRNA_LIGASE_I"/>
    <property type="match status" value="1"/>
</dbReference>
<protein>
    <recommendedName>
        <fullName evidence="1">Glutamine--tRNA ligase</fullName>
        <ecNumber evidence="1">6.1.1.18</ecNumber>
    </recommendedName>
    <alternativeName>
        <fullName evidence="1">Glutaminyl-tRNA synthetase</fullName>
        <shortName evidence="1">GlnRS</shortName>
    </alternativeName>
</protein>
<evidence type="ECO:0000255" key="1">
    <source>
        <dbReference type="HAMAP-Rule" id="MF_00126"/>
    </source>
</evidence>
<gene>
    <name evidence="1" type="primary">glnS</name>
    <name type="ordered locus">SeAg_B0733</name>
</gene>
<proteinExistence type="inferred from homology"/>
<reference key="1">
    <citation type="journal article" date="2011" name="J. Bacteriol.">
        <title>Comparative genomics of 28 Salmonella enterica isolates: evidence for CRISPR-mediated adaptive sublineage evolution.</title>
        <authorList>
            <person name="Fricke W.F."/>
            <person name="Mammel M.K."/>
            <person name="McDermott P.F."/>
            <person name="Tartera C."/>
            <person name="White D.G."/>
            <person name="Leclerc J.E."/>
            <person name="Ravel J."/>
            <person name="Cebula T.A."/>
        </authorList>
    </citation>
    <scope>NUCLEOTIDE SEQUENCE [LARGE SCALE GENOMIC DNA]</scope>
    <source>
        <strain>SL483</strain>
    </source>
</reference>
<name>SYQ_SALA4</name>
<comment type="catalytic activity">
    <reaction evidence="1">
        <text>tRNA(Gln) + L-glutamine + ATP = L-glutaminyl-tRNA(Gln) + AMP + diphosphate</text>
        <dbReference type="Rhea" id="RHEA:20121"/>
        <dbReference type="Rhea" id="RHEA-COMP:9662"/>
        <dbReference type="Rhea" id="RHEA-COMP:9681"/>
        <dbReference type="ChEBI" id="CHEBI:30616"/>
        <dbReference type="ChEBI" id="CHEBI:33019"/>
        <dbReference type="ChEBI" id="CHEBI:58359"/>
        <dbReference type="ChEBI" id="CHEBI:78442"/>
        <dbReference type="ChEBI" id="CHEBI:78521"/>
        <dbReference type="ChEBI" id="CHEBI:456215"/>
        <dbReference type="EC" id="6.1.1.18"/>
    </reaction>
</comment>
<comment type="subunit">
    <text evidence="1">Monomer.</text>
</comment>
<comment type="subcellular location">
    <subcellularLocation>
        <location evidence="1">Cytoplasm</location>
    </subcellularLocation>
</comment>
<comment type="similarity">
    <text evidence="1">Belongs to the class-I aminoacyl-tRNA synthetase family.</text>
</comment>
<keyword id="KW-0030">Aminoacyl-tRNA synthetase</keyword>
<keyword id="KW-0067">ATP-binding</keyword>
<keyword id="KW-0963">Cytoplasm</keyword>
<keyword id="KW-0436">Ligase</keyword>
<keyword id="KW-0547">Nucleotide-binding</keyword>
<keyword id="KW-0648">Protein biosynthesis</keyword>